<gene>
    <name evidence="1" type="primary">guaAB</name>
    <name type="ordered locus">UNCMA_14080</name>
    <name type="ORF">RCIX1576</name>
</gene>
<organism>
    <name type="scientific">Methanocella arvoryzae (strain DSM 22066 / NBRC 105507 / MRE50)</name>
    <dbReference type="NCBI Taxonomy" id="351160"/>
    <lineage>
        <taxon>Archaea</taxon>
        <taxon>Methanobacteriati</taxon>
        <taxon>Methanobacteriota</taxon>
        <taxon>Stenosarchaea group</taxon>
        <taxon>Methanomicrobia</taxon>
        <taxon>Methanocellales</taxon>
        <taxon>Methanocellaceae</taxon>
        <taxon>Methanocella</taxon>
    </lineage>
</organism>
<evidence type="ECO:0000255" key="1">
    <source>
        <dbReference type="HAMAP-Rule" id="MF_00345"/>
    </source>
</evidence>
<dbReference type="EC" id="6.3.5.2" evidence="1"/>
<dbReference type="EMBL" id="AM114193">
    <property type="protein sequence ID" value="CAJ36825.1"/>
    <property type="molecule type" value="Genomic_DNA"/>
</dbReference>
<dbReference type="RefSeq" id="WP_012035736.1">
    <property type="nucleotide sequence ID" value="NC_009464.1"/>
</dbReference>
<dbReference type="SMR" id="Q0W468"/>
<dbReference type="STRING" id="351160.RCIX1576"/>
<dbReference type="GeneID" id="5143968"/>
<dbReference type="KEGG" id="rci:RCIX1576"/>
<dbReference type="PATRIC" id="fig|351160.9.peg.1450"/>
<dbReference type="eggNOG" id="arCOG00085">
    <property type="taxonomic scope" value="Archaea"/>
</dbReference>
<dbReference type="OrthoDB" id="33844at2157"/>
<dbReference type="UniPathway" id="UPA00189">
    <property type="reaction ID" value="UER00296"/>
</dbReference>
<dbReference type="Proteomes" id="UP000000663">
    <property type="component" value="Chromosome"/>
</dbReference>
<dbReference type="GO" id="GO:0005829">
    <property type="term" value="C:cytosol"/>
    <property type="evidence" value="ECO:0007669"/>
    <property type="project" value="TreeGrafter"/>
</dbReference>
<dbReference type="GO" id="GO:0005524">
    <property type="term" value="F:ATP binding"/>
    <property type="evidence" value="ECO:0007669"/>
    <property type="project" value="UniProtKB-UniRule"/>
</dbReference>
<dbReference type="GO" id="GO:0003921">
    <property type="term" value="F:GMP synthase activity"/>
    <property type="evidence" value="ECO:0007669"/>
    <property type="project" value="InterPro"/>
</dbReference>
<dbReference type="CDD" id="cd01997">
    <property type="entry name" value="GMP_synthase_C"/>
    <property type="match status" value="1"/>
</dbReference>
<dbReference type="FunFam" id="3.30.300.10:FF:000002">
    <property type="entry name" value="GMP synthase [glutamine-hydrolyzing]"/>
    <property type="match status" value="1"/>
</dbReference>
<dbReference type="FunFam" id="3.40.50.620:FF:000208">
    <property type="entry name" value="GMP synthase [glutamine-hydrolyzing] subunit B"/>
    <property type="match status" value="1"/>
</dbReference>
<dbReference type="Gene3D" id="3.30.300.10">
    <property type="match status" value="1"/>
</dbReference>
<dbReference type="Gene3D" id="3.40.50.620">
    <property type="entry name" value="HUPs"/>
    <property type="match status" value="1"/>
</dbReference>
<dbReference type="HAMAP" id="MF_00345">
    <property type="entry name" value="GMP_synthase_B"/>
    <property type="match status" value="1"/>
</dbReference>
<dbReference type="InterPro" id="IPR001674">
    <property type="entry name" value="GMP_synth_C"/>
</dbReference>
<dbReference type="InterPro" id="IPR026598">
    <property type="entry name" value="GMP_synthase_B"/>
</dbReference>
<dbReference type="InterPro" id="IPR025777">
    <property type="entry name" value="GMPS_ATP_PPase_dom"/>
</dbReference>
<dbReference type="InterPro" id="IPR014729">
    <property type="entry name" value="Rossmann-like_a/b/a_fold"/>
</dbReference>
<dbReference type="NCBIfam" id="TIGR00884">
    <property type="entry name" value="guaA_Cterm"/>
    <property type="match status" value="1"/>
</dbReference>
<dbReference type="PANTHER" id="PTHR11922:SF2">
    <property type="entry name" value="GMP SYNTHASE [GLUTAMINE-HYDROLYZING]"/>
    <property type="match status" value="1"/>
</dbReference>
<dbReference type="PANTHER" id="PTHR11922">
    <property type="entry name" value="GMP SYNTHASE-RELATED"/>
    <property type="match status" value="1"/>
</dbReference>
<dbReference type="Pfam" id="PF00958">
    <property type="entry name" value="GMP_synt_C"/>
    <property type="match status" value="1"/>
</dbReference>
<dbReference type="SUPFAM" id="SSF52402">
    <property type="entry name" value="Adenine nucleotide alpha hydrolases-like"/>
    <property type="match status" value="1"/>
</dbReference>
<dbReference type="SUPFAM" id="SSF54810">
    <property type="entry name" value="GMP synthetase C-terminal dimerisation domain"/>
    <property type="match status" value="1"/>
</dbReference>
<dbReference type="PROSITE" id="PS51553">
    <property type="entry name" value="GMPS_ATP_PPASE"/>
    <property type="match status" value="1"/>
</dbReference>
<protein>
    <recommendedName>
        <fullName evidence="1">GMP synthase [glutamine-hydrolyzing] subunit B</fullName>
        <ecNumber evidence="1">6.3.5.2</ecNumber>
    </recommendedName>
    <alternativeName>
        <fullName evidence="1">GMP synthetase</fullName>
    </alternativeName>
</protein>
<accession>Q0W468</accession>
<keyword id="KW-0067">ATP-binding</keyword>
<keyword id="KW-0332">GMP biosynthesis</keyword>
<keyword id="KW-0436">Ligase</keyword>
<keyword id="KW-0547">Nucleotide-binding</keyword>
<keyword id="KW-0658">Purine biosynthesis</keyword>
<keyword id="KW-1185">Reference proteome</keyword>
<feature type="chain" id="PRO_1000048382" description="GMP synthase [glutamine-hydrolyzing] subunit B">
    <location>
        <begin position="1"/>
        <end position="305"/>
    </location>
</feature>
<feature type="domain" description="GMPS ATP-PPase" evidence="1">
    <location>
        <begin position="2"/>
        <end position="184"/>
    </location>
</feature>
<feature type="binding site" evidence="1">
    <location>
        <begin position="29"/>
        <end position="35"/>
    </location>
    <ligand>
        <name>ATP</name>
        <dbReference type="ChEBI" id="CHEBI:30616"/>
    </ligand>
</feature>
<comment type="function">
    <text evidence="1">Catalyzes the synthesis of GMP from XMP.</text>
</comment>
<comment type="catalytic activity">
    <reaction evidence="1">
        <text>XMP + L-glutamine + ATP + H2O = GMP + L-glutamate + AMP + diphosphate + 2 H(+)</text>
        <dbReference type="Rhea" id="RHEA:11680"/>
        <dbReference type="ChEBI" id="CHEBI:15377"/>
        <dbReference type="ChEBI" id="CHEBI:15378"/>
        <dbReference type="ChEBI" id="CHEBI:29985"/>
        <dbReference type="ChEBI" id="CHEBI:30616"/>
        <dbReference type="ChEBI" id="CHEBI:33019"/>
        <dbReference type="ChEBI" id="CHEBI:57464"/>
        <dbReference type="ChEBI" id="CHEBI:58115"/>
        <dbReference type="ChEBI" id="CHEBI:58359"/>
        <dbReference type="ChEBI" id="CHEBI:456215"/>
        <dbReference type="EC" id="6.3.5.2"/>
    </reaction>
</comment>
<comment type="pathway">
    <text evidence="1">Purine metabolism; GMP biosynthesis; GMP from XMP (L-Gln route): step 1/1.</text>
</comment>
<comment type="subunit">
    <text evidence="1">Heterodimer composed of a glutamine amidotransferase subunit (A) and a GMP-binding subunit (B).</text>
</comment>
<name>GUAAB_METAR</name>
<sequence length="305" mass="33759">MVDANAFIDEAIADIKLKVGNGKALIALSGGVDSSVCAILAHRALGDRLIPVYVDTGLMRKGETDRIREIFKFMNPHVVDASDRFFNALKGVTDPEAKRKIVGEMFIRVFEDVVKGLEVDFLIQGTIYPDRIESEGGIKSHHNVGGLPSVTEFKGIIEPLQDLYKDEVREVARALPLPEEISERMPFPGPGLSVRVIGEVTREKIAVVREANAIVEQELVHQFKPWQCLAALLEKGTGVKGDNRCHGWIIAVRAVESRDAMTANHMELPWETLNKISSRITSEIPSVARVVYDITPKPPATIEFE</sequence>
<proteinExistence type="inferred from homology"/>
<reference key="1">
    <citation type="journal article" date="2006" name="Science">
        <title>Genome of rice cluster I archaea -- the key methane producers in the rice rhizosphere.</title>
        <authorList>
            <person name="Erkel C."/>
            <person name="Kube M."/>
            <person name="Reinhardt R."/>
            <person name="Liesack W."/>
        </authorList>
    </citation>
    <scope>NUCLEOTIDE SEQUENCE [LARGE SCALE GENOMIC DNA]</scope>
    <source>
        <strain>DSM 22066 / NBRC 105507 / MRE50</strain>
    </source>
</reference>